<accession>P35561</accession>
<organism>
    <name type="scientific">Mus musculus</name>
    <name type="common">Mouse</name>
    <dbReference type="NCBI Taxonomy" id="10090"/>
    <lineage>
        <taxon>Eukaryota</taxon>
        <taxon>Metazoa</taxon>
        <taxon>Chordata</taxon>
        <taxon>Craniata</taxon>
        <taxon>Vertebrata</taxon>
        <taxon>Euteleostomi</taxon>
        <taxon>Mammalia</taxon>
        <taxon>Eutheria</taxon>
        <taxon>Euarchontoglires</taxon>
        <taxon>Glires</taxon>
        <taxon>Rodentia</taxon>
        <taxon>Myomorpha</taxon>
        <taxon>Muroidea</taxon>
        <taxon>Muridae</taxon>
        <taxon>Murinae</taxon>
        <taxon>Mus</taxon>
        <taxon>Mus</taxon>
    </lineage>
</organism>
<name>KCNJ2_MOUSE</name>
<protein>
    <recommendedName>
        <fullName>Inward rectifier potassium channel 2</fullName>
    </recommendedName>
    <alternativeName>
        <fullName>Inward rectifier K(+) channel Kir2.1</fullName>
        <shortName>IRK-1</shortName>
    </alternativeName>
    <alternativeName>
        <fullName>Potassium channel, inwardly rectifying subfamily J member 2</fullName>
    </alternativeName>
</protein>
<feature type="chain" id="PRO_0000154925" description="Inward rectifier potassium channel 2">
    <location>
        <begin position="1"/>
        <end position="428"/>
    </location>
</feature>
<feature type="topological domain" description="Cytoplasmic" evidence="1">
    <location>
        <begin position="1"/>
        <end position="81"/>
    </location>
</feature>
<feature type="transmembrane region" description="Helical; Name=M1" evidence="1">
    <location>
        <begin position="82"/>
        <end position="106"/>
    </location>
</feature>
<feature type="topological domain" description="Extracellular" evidence="1">
    <location>
        <begin position="107"/>
        <end position="128"/>
    </location>
</feature>
<feature type="intramembrane region" description="Helical; Pore-forming; Name=H5" evidence="1">
    <location>
        <begin position="129"/>
        <end position="140"/>
    </location>
</feature>
<feature type="intramembrane region" description="Pore-forming" evidence="1">
    <location>
        <begin position="141"/>
        <end position="147"/>
    </location>
</feature>
<feature type="topological domain" description="Extracellular" evidence="1">
    <location>
        <begin position="148"/>
        <end position="156"/>
    </location>
</feature>
<feature type="transmembrane region" description="Helical; Name=M2" evidence="1">
    <location>
        <begin position="157"/>
        <end position="178"/>
    </location>
</feature>
<feature type="topological domain" description="Cytoplasmic" evidence="1">
    <location>
        <begin position="179"/>
        <end position="428"/>
    </location>
</feature>
<feature type="region of interest" description="Polyphosphoinositide (PIP2)-binding" evidence="3">
    <location>
        <begin position="181"/>
        <end position="208"/>
    </location>
</feature>
<feature type="region of interest" description="Disordered" evidence="5">
    <location>
        <begin position="383"/>
        <end position="428"/>
    </location>
</feature>
<feature type="short sequence motif" description="Selectivity filter" evidence="1">
    <location>
        <begin position="142"/>
        <end position="147"/>
    </location>
</feature>
<feature type="short sequence motif" description="PDZ-binding" evidence="4">
    <location>
        <begin position="426"/>
        <end position="428"/>
    </location>
</feature>
<feature type="site" description="Role in the control of polyamine-mediated channel gating and in the blocking by intracellular magnesium" evidence="1">
    <location>
        <position position="172"/>
    </location>
</feature>
<feature type="modified residue" description="S-nitrosocysteine" evidence="2">
    <location>
        <position position="76"/>
    </location>
</feature>
<feature type="turn" evidence="10">
    <location>
        <begin position="188"/>
        <end position="190"/>
    </location>
</feature>
<feature type="strand" evidence="11">
    <location>
        <begin position="192"/>
        <end position="195"/>
    </location>
</feature>
<feature type="strand" evidence="11">
    <location>
        <begin position="199"/>
        <end position="204"/>
    </location>
</feature>
<feature type="strand" evidence="11">
    <location>
        <begin position="207"/>
        <end position="216"/>
    </location>
</feature>
<feature type="strand" evidence="10">
    <location>
        <begin position="218"/>
        <end position="220"/>
    </location>
</feature>
<feature type="strand" evidence="11">
    <location>
        <begin position="222"/>
        <end position="236"/>
    </location>
</feature>
<feature type="strand" evidence="11">
    <location>
        <begin position="242"/>
        <end position="250"/>
    </location>
</feature>
<feature type="turn" evidence="11">
    <location>
        <begin position="254"/>
        <end position="259"/>
    </location>
</feature>
<feature type="strand" evidence="11">
    <location>
        <begin position="267"/>
        <end position="272"/>
    </location>
</feature>
<feature type="turn" evidence="11">
    <location>
        <begin position="278"/>
        <end position="281"/>
    </location>
</feature>
<feature type="helix" evidence="11">
    <location>
        <begin position="284"/>
        <end position="288"/>
    </location>
</feature>
<feature type="strand" evidence="11">
    <location>
        <begin position="293"/>
        <end position="302"/>
    </location>
</feature>
<feature type="turn" evidence="11">
    <location>
        <begin position="303"/>
        <end position="305"/>
    </location>
</feature>
<feature type="strand" evidence="11">
    <location>
        <begin position="308"/>
        <end position="316"/>
    </location>
</feature>
<feature type="helix" evidence="11">
    <location>
        <begin position="317"/>
        <end position="319"/>
    </location>
</feature>
<feature type="strand" evidence="11">
    <location>
        <begin position="320"/>
        <end position="322"/>
    </location>
</feature>
<feature type="strand" evidence="11">
    <location>
        <begin position="324"/>
        <end position="326"/>
    </location>
</feature>
<feature type="strand" evidence="11">
    <location>
        <begin position="330"/>
        <end position="332"/>
    </location>
</feature>
<feature type="strand" evidence="11">
    <location>
        <begin position="334"/>
        <end position="340"/>
    </location>
</feature>
<feature type="helix" evidence="11">
    <location>
        <begin position="341"/>
        <end position="343"/>
    </location>
</feature>
<feature type="strand" evidence="11">
    <location>
        <begin position="347"/>
        <end position="349"/>
    </location>
</feature>
<feature type="helix" evidence="11">
    <location>
        <begin position="358"/>
        <end position="369"/>
    </location>
</feature>
<proteinExistence type="evidence at protein level"/>
<keyword id="KW-0002">3D-structure</keyword>
<keyword id="KW-1003">Cell membrane</keyword>
<keyword id="KW-0407">Ion channel</keyword>
<keyword id="KW-0406">Ion transport</keyword>
<keyword id="KW-0472">Membrane</keyword>
<keyword id="KW-0630">Potassium</keyword>
<keyword id="KW-0633">Potassium transport</keyword>
<keyword id="KW-1185">Reference proteome</keyword>
<keyword id="KW-0702">S-nitrosylation</keyword>
<keyword id="KW-0812">Transmembrane</keyword>
<keyword id="KW-1133">Transmembrane helix</keyword>
<keyword id="KW-0813">Transport</keyword>
<keyword id="KW-0851">Voltage-gated channel</keyword>
<sequence>MGSVRTNRYSIVSSEEDGMKLATMAVANGFGNGKSKVHTRQQCRSRFVKKDGHCNVQFINVGEKGQRYLADIFTTCVDIRWRWMLVIFCLAFVLSWLFFGCVFWLIALLHGDLDTSKVSKACVSEVNSFTAAFLFSIETQTTIGYGFRCVTDECPIAVFMVVFQSIVGCIIDAFIIGAVMAKMAKPKKRNETLVFSHNAVIAMRDGKLCLMWRVGNLRKSHLVEAHVRAQLLKSRITSEGEYIPLDQIDINVGFDSGIDRIFLVSPITIVHEIDEDSPLYDLSKQDIDNADFEIVVILEGMVEATAMTTQCRSSYLANEILWGHRYEPVLFEEKHYYKVDYSRFHKTYEVPNTPLCSARDLAEKKYILSNANSFCYENEVALTSKEEEEDSENGVPESTSTDSPPGIDLHNQASVPLEPRPLRRESEI</sequence>
<evidence type="ECO:0000250" key="1"/>
<evidence type="ECO:0000250" key="2">
    <source>
        <dbReference type="UniProtKB" id="P63252"/>
    </source>
</evidence>
<evidence type="ECO:0000250" key="3">
    <source>
        <dbReference type="UniProtKB" id="Q64273"/>
    </source>
</evidence>
<evidence type="ECO:0000255" key="4"/>
<evidence type="ECO:0000256" key="5">
    <source>
        <dbReference type="SAM" id="MobiDB-lite"/>
    </source>
</evidence>
<evidence type="ECO:0000269" key="6">
    <source>
    </source>
</evidence>
<evidence type="ECO:0000269" key="7">
    <source>
    </source>
</evidence>
<evidence type="ECO:0000269" key="8">
    <source>
    </source>
</evidence>
<evidence type="ECO:0000305" key="9"/>
<evidence type="ECO:0007829" key="10">
    <source>
        <dbReference type="PDB" id="1U4F"/>
    </source>
</evidence>
<evidence type="ECO:0007829" key="11">
    <source>
        <dbReference type="PDB" id="2GIX"/>
    </source>
</evidence>
<reference key="1">
    <citation type="journal article" date="1993" name="Nature">
        <title>Primary structure and functional expression of a mouse inward rectifier potassium channel.</title>
        <authorList>
            <person name="Kubo Y."/>
            <person name="Baldwin T.J."/>
            <person name="Jan Y.N."/>
            <person name="Jan L.Y."/>
        </authorList>
    </citation>
    <scope>NUCLEOTIDE SEQUENCE [MRNA]</scope>
    <scope>FUNCTION</scope>
    <scope>TRANSPORTER ACTIVITY</scope>
    <source>
        <strain>BALB/cJ</strain>
        <tissue>Macrophage</tissue>
    </source>
</reference>
<reference key="2">
    <citation type="journal article" date="1993" name="FEBS Lett.">
        <title>Molecular cloning, functional expression and localization of an inward rectifier potassium channel in the mouse brain.</title>
        <authorList>
            <person name="Morishige K."/>
            <person name="Takahashi N."/>
            <person name="Findlay I."/>
            <person name="Koyama H."/>
            <person name="Zanelli J.S."/>
            <person name="Peterson C."/>
            <person name="Jenkins N.A."/>
            <person name="Copeland N.G."/>
            <person name="Mori N."/>
            <person name="Kurachi Y."/>
        </authorList>
    </citation>
    <scope>NUCLEOTIDE SEQUENCE [MRNA]</scope>
    <scope>FUNCTION</scope>
    <scope>TRANSPORTER ACTIVITY</scope>
    <source>
        <tissue>Brain</tissue>
    </source>
</reference>
<reference key="3">
    <citation type="journal article" date="1998" name="Exp. Eye Res.">
        <title>Inwardly rectifying potassium channels in lens epithelium are from the IRK1 (Kir 2.1) family.</title>
        <authorList>
            <person name="Rae J.L."/>
            <person name="Shepard A.R."/>
        </authorList>
    </citation>
    <scope>NUCLEOTIDE SEQUENCE [MRNA]</scope>
    <source>
        <tissue>Lens epithelium</tissue>
    </source>
</reference>
<reference key="4">
    <citation type="journal article" date="2009" name="Immunity">
        <title>The phagosomal proteome in interferon-gamma-activated macrophages.</title>
        <authorList>
            <person name="Trost M."/>
            <person name="English L."/>
            <person name="Lemieux S."/>
            <person name="Courcelles M."/>
            <person name="Desjardins M."/>
            <person name="Thibault P."/>
        </authorList>
    </citation>
    <scope>IDENTIFICATION BY MASS SPECTROMETRY [LARGE SCALE ANALYSIS]</scope>
</reference>
<reference key="5">
    <citation type="journal article" date="2011" name="J. Biol. Chem.">
        <title>Kir2.6 regulates the surface expression of Kir2.x inward rectifier potassium channels.</title>
        <authorList>
            <person name="Dassau L."/>
            <person name="Conti L.R."/>
            <person name="Radeke C.M."/>
            <person name="Ptacek L.J."/>
            <person name="Vandenberg C.A."/>
        </authorList>
    </citation>
    <scope>SUBCELLULAR LOCATION</scope>
    <scope>INTERACTION WITH KCNJ18</scope>
</reference>
<dbReference type="EMBL" id="X73052">
    <property type="protein sequence ID" value="CAA51526.1"/>
    <property type="molecule type" value="mRNA"/>
</dbReference>
<dbReference type="EMBL" id="AF021136">
    <property type="protein sequence ID" value="AAB88794.1"/>
    <property type="molecule type" value="mRNA"/>
</dbReference>
<dbReference type="CCDS" id="CCDS25594.1"/>
<dbReference type="PIR" id="S32351">
    <property type="entry name" value="S32351"/>
</dbReference>
<dbReference type="RefSeq" id="NP_032451.1">
    <property type="nucleotide sequence ID" value="NM_008425.4"/>
</dbReference>
<dbReference type="PDB" id="1U4F">
    <property type="method" value="X-ray"/>
    <property type="resolution" value="2.41 A"/>
    <property type="chains" value="A/B/C/D=41-63, A/B/C/D=188-428"/>
</dbReference>
<dbReference type="PDB" id="2GIX">
    <property type="method" value="X-ray"/>
    <property type="resolution" value="2.02 A"/>
    <property type="chains" value="A/B/C/D=44-64, A/B/C/D=189-371"/>
</dbReference>
<dbReference type="PDB" id="2XKY">
    <property type="method" value="Other"/>
    <property type="resolution" value="17.20 A"/>
    <property type="chains" value="I/J/K/L=1-67, I/J/K/L=189-428"/>
</dbReference>
<dbReference type="PDBsum" id="1U4F"/>
<dbReference type="PDBsum" id="2GIX"/>
<dbReference type="PDBsum" id="2XKY"/>
<dbReference type="SMR" id="P35561"/>
<dbReference type="BioGRID" id="200900">
    <property type="interactions" value="3"/>
</dbReference>
<dbReference type="ComplexPortal" id="CPX-3068">
    <property type="entry name" value="Inward rectifier potassium channel 2 complex"/>
</dbReference>
<dbReference type="FunCoup" id="P35561">
    <property type="interactions" value="534"/>
</dbReference>
<dbReference type="IntAct" id="P35561">
    <property type="interactions" value="11"/>
</dbReference>
<dbReference type="MINT" id="P35561"/>
<dbReference type="STRING" id="10090.ENSMUSP00000037192"/>
<dbReference type="BindingDB" id="P35561"/>
<dbReference type="ChEMBL" id="CHEMBL1293290"/>
<dbReference type="GuidetoPHARMACOLOGY" id="430"/>
<dbReference type="GlyGen" id="P35561">
    <property type="glycosylation" value="1 site, 1 O-linked glycan (1 site)"/>
</dbReference>
<dbReference type="iPTMnet" id="P35561"/>
<dbReference type="PhosphoSitePlus" id="P35561"/>
<dbReference type="SwissPalm" id="P35561"/>
<dbReference type="PaxDb" id="10090-ENSMUSP00000037192"/>
<dbReference type="PeptideAtlas" id="P35561"/>
<dbReference type="ProteomicsDB" id="269203"/>
<dbReference type="ABCD" id="P35561">
    <property type="antibodies" value="1 sequenced antibody"/>
</dbReference>
<dbReference type="Antibodypedia" id="31891">
    <property type="antibodies" value="332 antibodies from 37 providers"/>
</dbReference>
<dbReference type="DNASU" id="16518"/>
<dbReference type="Ensembl" id="ENSMUST00000042970.3">
    <property type="protein sequence ID" value="ENSMUSP00000037192.3"/>
    <property type="gene ID" value="ENSMUSG00000041695.3"/>
</dbReference>
<dbReference type="GeneID" id="16518"/>
<dbReference type="KEGG" id="mmu:16518"/>
<dbReference type="UCSC" id="uc007mdw.2">
    <property type="organism name" value="mouse"/>
</dbReference>
<dbReference type="AGR" id="MGI:104744"/>
<dbReference type="CTD" id="3759"/>
<dbReference type="MGI" id="MGI:104744">
    <property type="gene designation" value="Kcnj2"/>
</dbReference>
<dbReference type="VEuPathDB" id="HostDB:ENSMUSG00000041695"/>
<dbReference type="eggNOG" id="KOG3827">
    <property type="taxonomic scope" value="Eukaryota"/>
</dbReference>
<dbReference type="GeneTree" id="ENSGT01030000234586"/>
<dbReference type="HOGENOM" id="CLU_022738_3_0_1"/>
<dbReference type="InParanoid" id="P35561"/>
<dbReference type="OMA" id="THPEMDH"/>
<dbReference type="OrthoDB" id="273257at2759"/>
<dbReference type="PhylomeDB" id="P35561"/>
<dbReference type="TreeFam" id="TF313676"/>
<dbReference type="Reactome" id="R-MMU-1296041">
    <property type="pathway name" value="Activation of G protein gated Potassium channels"/>
</dbReference>
<dbReference type="Reactome" id="R-MMU-1296053">
    <property type="pathway name" value="Classical Kir channels"/>
</dbReference>
<dbReference type="Reactome" id="R-MMU-5576886">
    <property type="pathway name" value="Phase 4 - resting membrane potential"/>
</dbReference>
<dbReference type="Reactome" id="R-MMU-997272">
    <property type="pathway name" value="Inhibition of voltage gated Ca2+ channels via Gbeta/gamma subunits"/>
</dbReference>
<dbReference type="BioGRID-ORCS" id="16518">
    <property type="hits" value="4 hits in 80 CRISPR screens"/>
</dbReference>
<dbReference type="EvolutionaryTrace" id="P35561"/>
<dbReference type="PRO" id="PR:P35561"/>
<dbReference type="Proteomes" id="UP000000589">
    <property type="component" value="Chromosome 11"/>
</dbReference>
<dbReference type="RNAct" id="P35561">
    <property type="molecule type" value="protein"/>
</dbReference>
<dbReference type="Bgee" id="ENSMUSG00000041695">
    <property type="expression patterns" value="Expressed in hindlimb stylopod muscle and 68 other cell types or tissues"/>
</dbReference>
<dbReference type="ExpressionAtlas" id="P35561">
    <property type="expression patterns" value="baseline and differential"/>
</dbReference>
<dbReference type="GO" id="GO:0043197">
    <property type="term" value="C:dendritic spine"/>
    <property type="evidence" value="ECO:0007669"/>
    <property type="project" value="Ensembl"/>
</dbReference>
<dbReference type="GO" id="GO:0098978">
    <property type="term" value="C:glutamatergic synapse"/>
    <property type="evidence" value="ECO:0007669"/>
    <property type="project" value="Ensembl"/>
</dbReference>
<dbReference type="GO" id="GO:0014704">
    <property type="term" value="C:intercalated disc"/>
    <property type="evidence" value="ECO:0007669"/>
    <property type="project" value="Ensembl"/>
</dbReference>
<dbReference type="GO" id="GO:0016020">
    <property type="term" value="C:membrane"/>
    <property type="evidence" value="ECO:0000250"/>
    <property type="project" value="UniProtKB"/>
</dbReference>
<dbReference type="GO" id="GO:0043025">
    <property type="term" value="C:neuronal cell body"/>
    <property type="evidence" value="ECO:0007669"/>
    <property type="project" value="Ensembl"/>
</dbReference>
<dbReference type="GO" id="GO:0005886">
    <property type="term" value="C:plasma membrane"/>
    <property type="evidence" value="ECO:0000304"/>
    <property type="project" value="Reactome"/>
</dbReference>
<dbReference type="GO" id="GO:0045211">
    <property type="term" value="C:postsynaptic membrane"/>
    <property type="evidence" value="ECO:0007669"/>
    <property type="project" value="Ensembl"/>
</dbReference>
<dbReference type="GO" id="GO:0030315">
    <property type="term" value="C:T-tubule"/>
    <property type="evidence" value="ECO:0000250"/>
    <property type="project" value="UniProtKB"/>
</dbReference>
<dbReference type="GO" id="GO:0008076">
    <property type="term" value="C:voltage-gated potassium channel complex"/>
    <property type="evidence" value="ECO:0007669"/>
    <property type="project" value="Ensembl"/>
</dbReference>
<dbReference type="GO" id="GO:0042802">
    <property type="term" value="F:identical protein binding"/>
    <property type="evidence" value="ECO:0000353"/>
    <property type="project" value="IntAct"/>
</dbReference>
<dbReference type="GO" id="GO:0005242">
    <property type="term" value="F:inward rectifier potassium channel activity"/>
    <property type="evidence" value="ECO:0000314"/>
    <property type="project" value="UniProtKB"/>
</dbReference>
<dbReference type="GO" id="GO:0005546">
    <property type="term" value="F:phosphatidylinositol-4,5-bisphosphate binding"/>
    <property type="evidence" value="ECO:0000250"/>
    <property type="project" value="UniProtKB"/>
</dbReference>
<dbReference type="GO" id="GO:0086008">
    <property type="term" value="F:voltage-gated potassium channel activity involved in cardiac muscle cell action potential repolarization"/>
    <property type="evidence" value="ECO:0007669"/>
    <property type="project" value="Ensembl"/>
</dbReference>
<dbReference type="GO" id="GO:0086001">
    <property type="term" value="P:cardiac muscle cell action potential"/>
    <property type="evidence" value="ECO:0000315"/>
    <property type="project" value="MGI"/>
</dbReference>
<dbReference type="GO" id="GO:0086002">
    <property type="term" value="P:cardiac muscle cell action potential involved in contraction"/>
    <property type="evidence" value="ECO:0007669"/>
    <property type="project" value="Ensembl"/>
</dbReference>
<dbReference type="GO" id="GO:0071260">
    <property type="term" value="P:cellular response to mechanical stimulus"/>
    <property type="evidence" value="ECO:0007669"/>
    <property type="project" value="Ensembl"/>
</dbReference>
<dbReference type="GO" id="GO:0015693">
    <property type="term" value="P:magnesium ion transport"/>
    <property type="evidence" value="ECO:0000314"/>
    <property type="project" value="MGI"/>
</dbReference>
<dbReference type="GO" id="GO:1901381">
    <property type="term" value="P:positive regulation of potassium ion transmembrane transport"/>
    <property type="evidence" value="ECO:0007669"/>
    <property type="project" value="Ensembl"/>
</dbReference>
<dbReference type="GO" id="GO:1990573">
    <property type="term" value="P:potassium ion import across plasma membrane"/>
    <property type="evidence" value="ECO:0007669"/>
    <property type="project" value="Ensembl"/>
</dbReference>
<dbReference type="GO" id="GO:0006813">
    <property type="term" value="P:potassium ion transport"/>
    <property type="evidence" value="ECO:0000250"/>
    <property type="project" value="UniProtKB"/>
</dbReference>
<dbReference type="GO" id="GO:0051289">
    <property type="term" value="P:protein homotetramerization"/>
    <property type="evidence" value="ECO:0000250"/>
    <property type="project" value="UniProtKB"/>
</dbReference>
<dbReference type="GO" id="GO:0086004">
    <property type="term" value="P:regulation of cardiac muscle cell contraction"/>
    <property type="evidence" value="ECO:0007669"/>
    <property type="project" value="Ensembl"/>
</dbReference>
<dbReference type="GO" id="GO:0086091">
    <property type="term" value="P:regulation of heart rate by cardiac conduction"/>
    <property type="evidence" value="ECO:0007669"/>
    <property type="project" value="Ensembl"/>
</dbReference>
<dbReference type="GO" id="GO:0060306">
    <property type="term" value="P:regulation of membrane repolarization"/>
    <property type="evidence" value="ECO:0007669"/>
    <property type="project" value="Ensembl"/>
</dbReference>
<dbReference type="GO" id="GO:0014861">
    <property type="term" value="P:regulation of skeletal muscle contraction via regulation of action potential"/>
    <property type="evidence" value="ECO:0007669"/>
    <property type="project" value="Ensembl"/>
</dbReference>
<dbReference type="GO" id="GO:0055119">
    <property type="term" value="P:relaxation of cardiac muscle"/>
    <property type="evidence" value="ECO:0007669"/>
    <property type="project" value="Ensembl"/>
</dbReference>
<dbReference type="GO" id="GO:0090076">
    <property type="term" value="P:relaxation of skeletal muscle"/>
    <property type="evidence" value="ECO:0007669"/>
    <property type="project" value="Ensembl"/>
</dbReference>
<dbReference type="FunFam" id="1.10.287.70:FF:000039">
    <property type="entry name" value="ATP-sensitive inward rectifier potassium channel 12"/>
    <property type="match status" value="1"/>
</dbReference>
<dbReference type="FunFam" id="2.60.40.1400:FF:000001">
    <property type="entry name" value="G protein-activated inward rectifier potassium channel 2"/>
    <property type="match status" value="1"/>
</dbReference>
<dbReference type="Gene3D" id="1.10.287.70">
    <property type="match status" value="1"/>
</dbReference>
<dbReference type="Gene3D" id="2.60.40.1400">
    <property type="entry name" value="G protein-activated inward rectifier potassium channel 1"/>
    <property type="match status" value="1"/>
</dbReference>
<dbReference type="InterPro" id="IPR014756">
    <property type="entry name" value="Ig_E-set"/>
</dbReference>
<dbReference type="InterPro" id="IPR041647">
    <property type="entry name" value="IRK_C"/>
</dbReference>
<dbReference type="InterPro" id="IPR016449">
    <property type="entry name" value="K_chnl_inward-rec_Kir"/>
</dbReference>
<dbReference type="InterPro" id="IPR003271">
    <property type="entry name" value="K_chnl_inward-rec_Kir2.1"/>
</dbReference>
<dbReference type="InterPro" id="IPR013518">
    <property type="entry name" value="K_chnl_inward-rec_Kir_cyto"/>
</dbReference>
<dbReference type="InterPro" id="IPR013673">
    <property type="entry name" value="K_chnl_inward-rec_Kir_N"/>
</dbReference>
<dbReference type="InterPro" id="IPR040445">
    <property type="entry name" value="Kir_TM"/>
</dbReference>
<dbReference type="PANTHER" id="PTHR11767">
    <property type="entry name" value="INWARD RECTIFIER POTASSIUM CHANNEL"/>
    <property type="match status" value="1"/>
</dbReference>
<dbReference type="PANTHER" id="PTHR11767:SF43">
    <property type="entry name" value="INWARD RECTIFIER POTASSIUM CHANNEL 2"/>
    <property type="match status" value="1"/>
</dbReference>
<dbReference type="Pfam" id="PF01007">
    <property type="entry name" value="IRK"/>
    <property type="match status" value="1"/>
</dbReference>
<dbReference type="Pfam" id="PF17655">
    <property type="entry name" value="IRK_C"/>
    <property type="match status" value="1"/>
</dbReference>
<dbReference type="Pfam" id="PF08466">
    <property type="entry name" value="IRK_N"/>
    <property type="match status" value="1"/>
</dbReference>
<dbReference type="PIRSF" id="PIRSF005465">
    <property type="entry name" value="GIRK_kir"/>
    <property type="match status" value="1"/>
</dbReference>
<dbReference type="PRINTS" id="PR01324">
    <property type="entry name" value="KIR21CHANNEL"/>
</dbReference>
<dbReference type="PRINTS" id="PR01320">
    <property type="entry name" value="KIRCHANNEL"/>
</dbReference>
<dbReference type="SUPFAM" id="SSF81296">
    <property type="entry name" value="E set domains"/>
    <property type="match status" value="1"/>
</dbReference>
<dbReference type="SUPFAM" id="SSF81324">
    <property type="entry name" value="Voltage-gated potassium channels"/>
    <property type="match status" value="1"/>
</dbReference>
<comment type="function">
    <text evidence="2 7 8">Inward rectifier potassium channels are characterized by a greater tendency to allow potassium to flow into the cell rather than out of it. Their voltage dependence is regulated by the concentration of extracellular potassium; as external potassium is raised, the voltage range of the channel opening shifts to more positive voltages. The inward rectification is mainly due to the blockage of outward current by internal magnesium (PubMed:7680768, PubMed:8282096). Can be blocked by extracellular barium and cesium. Probably participates in establishing action potential waveform and excitability of neuronal and muscle tissues (By similarity).</text>
</comment>
<comment type="catalytic activity">
    <reaction evidence="7 8">
        <text>K(+)(in) = K(+)(out)</text>
        <dbReference type="Rhea" id="RHEA:29463"/>
        <dbReference type="ChEBI" id="CHEBI:29103"/>
    </reaction>
</comment>
<comment type="activity regulation">
    <text evidence="3">Activated by phosphatidylinositol 4,5 biphosphate (PtdIns(4,5)P2).</text>
</comment>
<comment type="subunit">
    <text evidence="2 6">Homotetramer. Homomultimeric and heteromultimeric association with KCNJ4/Kir2.3. Can form heteromeric channels with Kir2.6/KCNJ18 (PubMed:21209095). Associates, via its PDZ-recognition domain, with a complex containing LIN7A, LIN7B, LIN7C, DLG1, CASK and APBA1.</text>
</comment>
<comment type="interaction">
    <interactant intactId="EBI-703793">
        <id>P35561</id>
    </interactant>
    <interactant intactId="EBI-703793">
        <id>P35561</id>
        <label>Kcnj2</label>
    </interactant>
    <organismsDiffer>false</organismsDiffer>
    <experiments>7</experiments>
</comment>
<comment type="interaction">
    <interactant intactId="EBI-703793">
        <id>P35561</id>
    </interactant>
    <interactant intactId="EBI-703640">
        <id>P24588</id>
        <label>AKAP5</label>
    </interactant>
    <organismsDiffer>true</organismsDiffer>
    <experiments>2</experiments>
</comment>
<comment type="interaction">
    <interactant intactId="EBI-703793">
        <id>P35561</id>
    </interactant>
    <interactant intactId="EBI-4319005">
        <id>B2RYN6</id>
        <label>Ap1g1</label>
    </interactant>
    <organismsDiffer>true</organismsDiffer>
    <experiments>2</experiments>
</comment>
<comment type="interaction">
    <interactant intactId="EBI-703793">
        <id>P35561</id>
    </interactant>
    <interactant intactId="EBI-663057">
        <id>Q15700-4</id>
        <label>DLG2</label>
    </interactant>
    <organismsDiffer>true</organismsDiffer>
    <experiments>6</experiments>
</comment>
<comment type="interaction">
    <interactant intactId="EBI-703793">
        <id>P35561</id>
    </interactant>
    <interactant intactId="EBI-779542">
        <id>Q2YHQ3</id>
        <label>FLNA</label>
    </interactant>
    <organismsDiffer>true</organismsDiffer>
    <experiments>3</experiments>
</comment>
<comment type="subcellular location">
    <subcellularLocation>
        <location evidence="6">Cell membrane</location>
        <topology evidence="4">Multi-pass membrane protein</topology>
    </subcellularLocation>
    <subcellularLocation>
        <location evidence="3">Cell membrane</location>
        <location evidence="3">Sarcolemma</location>
        <location evidence="3">T-tubule</location>
    </subcellularLocation>
</comment>
<comment type="tissue specificity">
    <text>Prominently expressed in the central nervous system. Also found in other excitable tissues such as heart and skeletal muscle.</text>
</comment>
<comment type="PTM">
    <text evidence="2">S-nitrosylation increases the open probability and inward rectifying currents.</text>
</comment>
<comment type="similarity">
    <text evidence="9">Belongs to the inward rectifier-type potassium channel (TC 1.A.2.1) family. KCNJ2 subfamily.</text>
</comment>
<gene>
    <name type="primary">Kcnj2</name>
    <name type="synonym">Irk1</name>
</gene>